<comment type="function">
    <text evidence="1">Inhibitor of the serine/threonine-protein kinase PAK4. Acts by binding PAK4 in a substrate-like manner, inhibiting the protein kinase activity.</text>
</comment>
<comment type="subunit">
    <text evidence="3">Interacts with PAK4 (PubMed:26607847).</text>
</comment>
<comment type="subcellular location">
    <subcellularLocation>
        <location evidence="3">Nucleus</location>
    </subcellularLocation>
</comment>
<comment type="domain">
    <text evidence="1">The Inka box (also named iBox or inca box) binds and inhibits PAK4 by binding a substrate-like manner.</text>
</comment>
<comment type="similarity">
    <text evidence="5">Belongs to the INKA family.</text>
</comment>
<comment type="sequence caution" evidence="5">
    <conflict type="erroneous initiation">
        <sequence resource="EMBL-CDS" id="BAG57355"/>
    </conflict>
    <text>Extended N-terminus.</text>
</comment>
<comment type="sequence caution" evidence="5">
    <conflict type="erroneous initiation">
        <sequence resource="EMBL-CDS" id="CAB69909"/>
    </conflict>
    <text>Extended N-terminus.</text>
</comment>
<proteinExistence type="evidence at protein level"/>
<evidence type="ECO:0000250" key="1">
    <source>
        <dbReference type="UniProtKB" id="Q96EL1"/>
    </source>
</evidence>
<evidence type="ECO:0000256" key="2">
    <source>
        <dbReference type="SAM" id="MobiDB-lite"/>
    </source>
</evidence>
<evidence type="ECO:0000269" key="3">
    <source>
    </source>
</evidence>
<evidence type="ECO:0000303" key="4">
    <source>
    </source>
</evidence>
<evidence type="ECO:0000305" key="5"/>
<evidence type="ECO:0000312" key="6">
    <source>
        <dbReference type="HGNC" id="HGNC:28045"/>
    </source>
</evidence>
<reference key="1">
    <citation type="submission" date="2000-01" db="EMBL/GenBank/DDBJ databases">
        <authorList>
            <person name="Rhodes S."/>
            <person name="Huckle E."/>
        </authorList>
    </citation>
    <scope>NUCLEOTIDE SEQUENCE [LARGE SCALE MRNA]</scope>
</reference>
<reference key="2">
    <citation type="journal article" date="2004" name="Nat. Genet.">
        <title>Complete sequencing and characterization of 21,243 full-length human cDNAs.</title>
        <authorList>
            <person name="Ota T."/>
            <person name="Suzuki Y."/>
            <person name="Nishikawa T."/>
            <person name="Otsuki T."/>
            <person name="Sugiyama T."/>
            <person name="Irie R."/>
            <person name="Wakamatsu A."/>
            <person name="Hayashi K."/>
            <person name="Sato H."/>
            <person name="Nagai K."/>
            <person name="Kimura K."/>
            <person name="Makita H."/>
            <person name="Sekine M."/>
            <person name="Obayashi M."/>
            <person name="Nishi T."/>
            <person name="Shibahara T."/>
            <person name="Tanaka T."/>
            <person name="Ishii S."/>
            <person name="Yamamoto J."/>
            <person name="Saito K."/>
            <person name="Kawai Y."/>
            <person name="Isono Y."/>
            <person name="Nakamura Y."/>
            <person name="Nagahari K."/>
            <person name="Murakami K."/>
            <person name="Yasuda T."/>
            <person name="Iwayanagi T."/>
            <person name="Wagatsuma M."/>
            <person name="Shiratori A."/>
            <person name="Sudo H."/>
            <person name="Hosoiri T."/>
            <person name="Kaku Y."/>
            <person name="Kodaira H."/>
            <person name="Kondo H."/>
            <person name="Sugawara M."/>
            <person name="Takahashi M."/>
            <person name="Kanda K."/>
            <person name="Yokoi T."/>
            <person name="Furuya T."/>
            <person name="Kikkawa E."/>
            <person name="Omura Y."/>
            <person name="Abe K."/>
            <person name="Kamihara K."/>
            <person name="Katsuta N."/>
            <person name="Sato K."/>
            <person name="Tanikawa M."/>
            <person name="Yamazaki M."/>
            <person name="Ninomiya K."/>
            <person name="Ishibashi T."/>
            <person name="Yamashita H."/>
            <person name="Murakawa K."/>
            <person name="Fujimori K."/>
            <person name="Tanai H."/>
            <person name="Kimata M."/>
            <person name="Watanabe M."/>
            <person name="Hiraoka S."/>
            <person name="Chiba Y."/>
            <person name="Ishida S."/>
            <person name="Ono Y."/>
            <person name="Takiguchi S."/>
            <person name="Watanabe S."/>
            <person name="Yosida M."/>
            <person name="Hotuta T."/>
            <person name="Kusano J."/>
            <person name="Kanehori K."/>
            <person name="Takahashi-Fujii A."/>
            <person name="Hara H."/>
            <person name="Tanase T.-O."/>
            <person name="Nomura Y."/>
            <person name="Togiya S."/>
            <person name="Komai F."/>
            <person name="Hara R."/>
            <person name="Takeuchi K."/>
            <person name="Arita M."/>
            <person name="Imose N."/>
            <person name="Musashino K."/>
            <person name="Yuuki H."/>
            <person name="Oshima A."/>
            <person name="Sasaki N."/>
            <person name="Aotsuka S."/>
            <person name="Yoshikawa Y."/>
            <person name="Matsunawa H."/>
            <person name="Ichihara T."/>
            <person name="Shiohata N."/>
            <person name="Sano S."/>
            <person name="Moriya S."/>
            <person name="Momiyama H."/>
            <person name="Satoh N."/>
            <person name="Takami S."/>
            <person name="Terashima Y."/>
            <person name="Suzuki O."/>
            <person name="Nakagawa S."/>
            <person name="Senoh A."/>
            <person name="Mizoguchi H."/>
            <person name="Goto Y."/>
            <person name="Shimizu F."/>
            <person name="Wakebe H."/>
            <person name="Hishigaki H."/>
            <person name="Watanabe T."/>
            <person name="Sugiyama A."/>
            <person name="Takemoto M."/>
            <person name="Kawakami B."/>
            <person name="Yamazaki M."/>
            <person name="Watanabe K."/>
            <person name="Kumagai A."/>
            <person name="Itakura S."/>
            <person name="Fukuzumi Y."/>
            <person name="Fujimori Y."/>
            <person name="Komiyama M."/>
            <person name="Tashiro H."/>
            <person name="Tanigami A."/>
            <person name="Fujiwara T."/>
            <person name="Ono T."/>
            <person name="Yamada K."/>
            <person name="Fujii Y."/>
            <person name="Ozaki K."/>
            <person name="Hirao M."/>
            <person name="Ohmori Y."/>
            <person name="Kawabata A."/>
            <person name="Hikiji T."/>
            <person name="Kobatake N."/>
            <person name="Inagaki H."/>
            <person name="Ikema Y."/>
            <person name="Okamoto S."/>
            <person name="Okitani R."/>
            <person name="Kawakami T."/>
            <person name="Noguchi S."/>
            <person name="Itoh T."/>
            <person name="Shigeta K."/>
            <person name="Senba T."/>
            <person name="Matsumura K."/>
            <person name="Nakajima Y."/>
            <person name="Mizuno T."/>
            <person name="Morinaga M."/>
            <person name="Sasaki M."/>
            <person name="Togashi T."/>
            <person name="Oyama M."/>
            <person name="Hata H."/>
            <person name="Watanabe M."/>
            <person name="Komatsu T."/>
            <person name="Mizushima-Sugano J."/>
            <person name="Satoh T."/>
            <person name="Shirai Y."/>
            <person name="Takahashi Y."/>
            <person name="Nakagawa K."/>
            <person name="Okumura K."/>
            <person name="Nagase T."/>
            <person name="Nomura N."/>
            <person name="Kikuchi H."/>
            <person name="Masuho Y."/>
            <person name="Yamashita R."/>
            <person name="Nakai K."/>
            <person name="Yada T."/>
            <person name="Nakamura Y."/>
            <person name="Ohara O."/>
            <person name="Isogai T."/>
            <person name="Sugano S."/>
        </authorList>
    </citation>
    <scope>NUCLEOTIDE SEQUENCE [LARGE SCALE MRNA]</scope>
    <source>
        <tissue>Cerebellum</tissue>
    </source>
</reference>
<reference key="3">
    <citation type="journal article" date="2006" name="Nature">
        <title>The DNA sequence and biological annotation of human chromosome 1.</title>
        <authorList>
            <person name="Gregory S.G."/>
            <person name="Barlow K.F."/>
            <person name="McLay K.E."/>
            <person name="Kaul R."/>
            <person name="Swarbreck D."/>
            <person name="Dunham A."/>
            <person name="Scott C.E."/>
            <person name="Howe K.L."/>
            <person name="Woodfine K."/>
            <person name="Spencer C.C.A."/>
            <person name="Jones M.C."/>
            <person name="Gillson C."/>
            <person name="Searle S."/>
            <person name="Zhou Y."/>
            <person name="Kokocinski F."/>
            <person name="McDonald L."/>
            <person name="Evans R."/>
            <person name="Phillips K."/>
            <person name="Atkinson A."/>
            <person name="Cooper R."/>
            <person name="Jones C."/>
            <person name="Hall R.E."/>
            <person name="Andrews T.D."/>
            <person name="Lloyd C."/>
            <person name="Ainscough R."/>
            <person name="Almeida J.P."/>
            <person name="Ambrose K.D."/>
            <person name="Anderson F."/>
            <person name="Andrew R.W."/>
            <person name="Ashwell R.I.S."/>
            <person name="Aubin K."/>
            <person name="Babbage A.K."/>
            <person name="Bagguley C.L."/>
            <person name="Bailey J."/>
            <person name="Beasley H."/>
            <person name="Bethel G."/>
            <person name="Bird C.P."/>
            <person name="Bray-Allen S."/>
            <person name="Brown J.Y."/>
            <person name="Brown A.J."/>
            <person name="Buckley D."/>
            <person name="Burton J."/>
            <person name="Bye J."/>
            <person name="Carder C."/>
            <person name="Chapman J.C."/>
            <person name="Clark S.Y."/>
            <person name="Clarke G."/>
            <person name="Clee C."/>
            <person name="Cobley V."/>
            <person name="Collier R.E."/>
            <person name="Corby N."/>
            <person name="Coville G.J."/>
            <person name="Davies J."/>
            <person name="Deadman R."/>
            <person name="Dunn M."/>
            <person name="Earthrowl M."/>
            <person name="Ellington A.G."/>
            <person name="Errington H."/>
            <person name="Frankish A."/>
            <person name="Frankland J."/>
            <person name="French L."/>
            <person name="Garner P."/>
            <person name="Garnett J."/>
            <person name="Gay L."/>
            <person name="Ghori M.R.J."/>
            <person name="Gibson R."/>
            <person name="Gilby L.M."/>
            <person name="Gillett W."/>
            <person name="Glithero R.J."/>
            <person name="Grafham D.V."/>
            <person name="Griffiths C."/>
            <person name="Griffiths-Jones S."/>
            <person name="Grocock R."/>
            <person name="Hammond S."/>
            <person name="Harrison E.S.I."/>
            <person name="Hart E."/>
            <person name="Haugen E."/>
            <person name="Heath P.D."/>
            <person name="Holmes S."/>
            <person name="Holt K."/>
            <person name="Howden P.J."/>
            <person name="Hunt A.R."/>
            <person name="Hunt S.E."/>
            <person name="Hunter G."/>
            <person name="Isherwood J."/>
            <person name="James R."/>
            <person name="Johnson C."/>
            <person name="Johnson D."/>
            <person name="Joy A."/>
            <person name="Kay M."/>
            <person name="Kershaw J.K."/>
            <person name="Kibukawa M."/>
            <person name="Kimberley A.M."/>
            <person name="King A."/>
            <person name="Knights A.J."/>
            <person name="Lad H."/>
            <person name="Laird G."/>
            <person name="Lawlor S."/>
            <person name="Leongamornlert D.A."/>
            <person name="Lloyd D.M."/>
            <person name="Loveland J."/>
            <person name="Lovell J."/>
            <person name="Lush M.J."/>
            <person name="Lyne R."/>
            <person name="Martin S."/>
            <person name="Mashreghi-Mohammadi M."/>
            <person name="Matthews L."/>
            <person name="Matthews N.S.W."/>
            <person name="McLaren S."/>
            <person name="Milne S."/>
            <person name="Mistry S."/>
            <person name="Moore M.J.F."/>
            <person name="Nickerson T."/>
            <person name="O'Dell C.N."/>
            <person name="Oliver K."/>
            <person name="Palmeiri A."/>
            <person name="Palmer S.A."/>
            <person name="Parker A."/>
            <person name="Patel D."/>
            <person name="Pearce A.V."/>
            <person name="Peck A.I."/>
            <person name="Pelan S."/>
            <person name="Phelps K."/>
            <person name="Phillimore B.J."/>
            <person name="Plumb R."/>
            <person name="Rajan J."/>
            <person name="Raymond C."/>
            <person name="Rouse G."/>
            <person name="Saenphimmachak C."/>
            <person name="Sehra H.K."/>
            <person name="Sheridan E."/>
            <person name="Shownkeen R."/>
            <person name="Sims S."/>
            <person name="Skuce C.D."/>
            <person name="Smith M."/>
            <person name="Steward C."/>
            <person name="Subramanian S."/>
            <person name="Sycamore N."/>
            <person name="Tracey A."/>
            <person name="Tromans A."/>
            <person name="Van Helmond Z."/>
            <person name="Wall M."/>
            <person name="Wallis J.M."/>
            <person name="White S."/>
            <person name="Whitehead S.L."/>
            <person name="Wilkinson J.E."/>
            <person name="Willey D.L."/>
            <person name="Williams H."/>
            <person name="Wilming L."/>
            <person name="Wray P.W."/>
            <person name="Wu Z."/>
            <person name="Coulson A."/>
            <person name="Vaudin M."/>
            <person name="Sulston J.E."/>
            <person name="Durbin R.M."/>
            <person name="Hubbard T."/>
            <person name="Wooster R."/>
            <person name="Dunham I."/>
            <person name="Carter N.P."/>
            <person name="McVean G."/>
            <person name="Ross M.T."/>
            <person name="Harrow J."/>
            <person name="Olson M.V."/>
            <person name="Beck S."/>
            <person name="Rogers J."/>
            <person name="Bentley D.R."/>
        </authorList>
    </citation>
    <scope>NUCLEOTIDE SEQUENCE [LARGE SCALE GENOMIC DNA]</scope>
</reference>
<reference key="4">
    <citation type="submission" date="2005-07" db="EMBL/GenBank/DDBJ databases">
        <authorList>
            <person name="Mural R.J."/>
            <person name="Istrail S."/>
            <person name="Sutton G.G."/>
            <person name="Florea L."/>
            <person name="Halpern A.L."/>
            <person name="Mobarry C.M."/>
            <person name="Lippert R."/>
            <person name="Walenz B."/>
            <person name="Shatkay H."/>
            <person name="Dew I."/>
            <person name="Miller J.R."/>
            <person name="Flanigan M.J."/>
            <person name="Edwards N.J."/>
            <person name="Bolanos R."/>
            <person name="Fasulo D."/>
            <person name="Halldorsson B.V."/>
            <person name="Hannenhalli S."/>
            <person name="Turner R."/>
            <person name="Yooseph S."/>
            <person name="Lu F."/>
            <person name="Nusskern D.R."/>
            <person name="Shue B.C."/>
            <person name="Zheng X.H."/>
            <person name="Zhong F."/>
            <person name="Delcher A.L."/>
            <person name="Huson D.H."/>
            <person name="Kravitz S.A."/>
            <person name="Mouchard L."/>
            <person name="Reinert K."/>
            <person name="Remington K.A."/>
            <person name="Clark A.G."/>
            <person name="Waterman M.S."/>
            <person name="Eichler E.E."/>
            <person name="Adams M.D."/>
            <person name="Hunkapiller M.W."/>
            <person name="Myers E.W."/>
            <person name="Venter J.C."/>
        </authorList>
    </citation>
    <scope>NUCLEOTIDE SEQUENCE [LARGE SCALE GENOMIC DNA]</scope>
</reference>
<reference key="5">
    <citation type="journal article" date="2004" name="Genome Res.">
        <title>The status, quality, and expansion of the NIH full-length cDNA project: the Mammalian Gene Collection (MGC).</title>
        <authorList>
            <consortium name="The MGC Project Team"/>
        </authorList>
    </citation>
    <scope>NUCLEOTIDE SEQUENCE [LARGE SCALE MRNA]</scope>
    <source>
        <tissue>Brain</tissue>
    </source>
</reference>
<reference key="6">
    <citation type="journal article" date="2007" name="Development">
        <title>Inca: a novel p21-activated kinase-associated protein required for cranial neural crest development.</title>
        <authorList>
            <person name="Luo T."/>
            <person name="Xu Y."/>
            <person name="Hoffman T.L."/>
            <person name="Zhang T."/>
            <person name="Schilling T."/>
            <person name="Sargent T.D."/>
        </authorList>
    </citation>
    <scope>IDENTIFICATION</scope>
</reference>
<reference key="7">
    <citation type="journal article" date="2015" name="Nat. Commun.">
        <title>An in cellulo-derived structure of PAK4 in complex with its inhibitor Inka1.</title>
        <authorList>
            <person name="Baskaran Y."/>
            <person name="Ang K.C."/>
            <person name="Anekal P.V."/>
            <person name="Chan W.L."/>
            <person name="Grimes J.M."/>
            <person name="Manser E."/>
            <person name="Robinson R.C."/>
        </authorList>
    </citation>
    <scope>SUBCELLULAR LOCATION</scope>
    <scope>INTERACTION WITH PAK4</scope>
</reference>
<dbReference type="EMBL" id="AL137198">
    <property type="protein sequence ID" value="CAB69908.1"/>
    <property type="molecule type" value="mRNA"/>
</dbReference>
<dbReference type="EMBL" id="AL137199">
    <property type="protein sequence ID" value="CAB69909.1"/>
    <property type="status" value="ALT_INIT"/>
    <property type="molecule type" value="mRNA"/>
</dbReference>
<dbReference type="EMBL" id="AK055667">
    <property type="protein sequence ID" value="BAG51550.1"/>
    <property type="molecule type" value="mRNA"/>
</dbReference>
<dbReference type="EMBL" id="AK293989">
    <property type="protein sequence ID" value="BAG57355.1"/>
    <property type="status" value="ALT_INIT"/>
    <property type="molecule type" value="mRNA"/>
</dbReference>
<dbReference type="EMBL" id="AL049557">
    <property type="status" value="NOT_ANNOTATED_CDS"/>
    <property type="molecule type" value="Genomic_DNA"/>
</dbReference>
<dbReference type="EMBL" id="CH471122">
    <property type="protein sequence ID" value="EAW56505.1"/>
    <property type="molecule type" value="Genomic_DNA"/>
</dbReference>
<dbReference type="EMBL" id="BC031558">
    <property type="protein sequence ID" value="AAH31558.1"/>
    <property type="molecule type" value="mRNA"/>
</dbReference>
<dbReference type="CCDS" id="CCDS841.1"/>
<dbReference type="RefSeq" id="NP_061972.1">
    <property type="nucleotide sequence ID" value="NM_019099.5"/>
</dbReference>
<dbReference type="RefSeq" id="NP_945120.1">
    <property type="nucleotide sequence ID" value="NM_198926.2"/>
</dbReference>
<dbReference type="BioGRID" id="121003">
    <property type="interactions" value="30"/>
</dbReference>
<dbReference type="FunCoup" id="Q9NTI7">
    <property type="interactions" value="1649"/>
</dbReference>
<dbReference type="IntAct" id="Q9NTI7">
    <property type="interactions" value="7"/>
</dbReference>
<dbReference type="STRING" id="9606.ENSP00000349805"/>
<dbReference type="iPTMnet" id="Q9NTI7"/>
<dbReference type="PhosphoSitePlus" id="Q9NTI7"/>
<dbReference type="BioMuta" id="FAM212B"/>
<dbReference type="MassIVE" id="Q9NTI7"/>
<dbReference type="PaxDb" id="9606-ENSP00000349805"/>
<dbReference type="PeptideAtlas" id="Q9NTI7"/>
<dbReference type="Antibodypedia" id="33813">
    <property type="antibodies" value="109 antibodies from 12 providers"/>
</dbReference>
<dbReference type="DNASU" id="55924"/>
<dbReference type="Ensembl" id="ENST00000357260.6">
    <property type="protein sequence ID" value="ENSP00000349805.5"/>
    <property type="gene ID" value="ENSG00000197852.12"/>
</dbReference>
<dbReference type="GeneID" id="55924"/>
<dbReference type="KEGG" id="hsa:55924"/>
<dbReference type="MANE-Select" id="ENST00000357260.6">
    <property type="protein sequence ID" value="ENSP00000349805.5"/>
    <property type="RefSeq nucleotide sequence ID" value="NM_019099.5"/>
    <property type="RefSeq protein sequence ID" value="NP_061972.1"/>
</dbReference>
<dbReference type="UCSC" id="uc001ebo.2">
    <property type="organism name" value="human"/>
</dbReference>
<dbReference type="AGR" id="HGNC:28045"/>
<dbReference type="CTD" id="55924"/>
<dbReference type="DisGeNET" id="55924"/>
<dbReference type="GeneCards" id="INKA2"/>
<dbReference type="HGNC" id="HGNC:28045">
    <property type="gene designation" value="INKA2"/>
</dbReference>
<dbReference type="HPA" id="ENSG00000197852">
    <property type="expression patterns" value="Low tissue specificity"/>
</dbReference>
<dbReference type="MIM" id="620403">
    <property type="type" value="gene"/>
</dbReference>
<dbReference type="neXtProt" id="NX_Q9NTI7"/>
<dbReference type="OpenTargets" id="ENSG00000197852"/>
<dbReference type="PharmGKB" id="PA142672431"/>
<dbReference type="VEuPathDB" id="HostDB:ENSG00000197852"/>
<dbReference type="eggNOG" id="ENOG502RZNT">
    <property type="taxonomic scope" value="Eukaryota"/>
</dbReference>
<dbReference type="GeneTree" id="ENSGT00530000063849"/>
<dbReference type="InParanoid" id="Q9NTI7"/>
<dbReference type="OMA" id="AENIWAG"/>
<dbReference type="OrthoDB" id="9931119at2759"/>
<dbReference type="PAN-GO" id="Q9NTI7">
    <property type="GO annotations" value="3 GO annotations based on evolutionary models"/>
</dbReference>
<dbReference type="PhylomeDB" id="Q9NTI7"/>
<dbReference type="TreeFam" id="TF332839"/>
<dbReference type="PathwayCommons" id="Q9NTI7"/>
<dbReference type="SignaLink" id="Q9NTI7"/>
<dbReference type="BioGRID-ORCS" id="55924">
    <property type="hits" value="26 hits in 1150 CRISPR screens"/>
</dbReference>
<dbReference type="ChiTaRS" id="FAM212B">
    <property type="organism name" value="human"/>
</dbReference>
<dbReference type="GenomeRNAi" id="55924"/>
<dbReference type="Pharos" id="Q9NTI7">
    <property type="development level" value="Tdark"/>
</dbReference>
<dbReference type="PRO" id="PR:Q9NTI7"/>
<dbReference type="Proteomes" id="UP000005640">
    <property type="component" value="Chromosome 1"/>
</dbReference>
<dbReference type="RNAct" id="Q9NTI7">
    <property type="molecule type" value="protein"/>
</dbReference>
<dbReference type="Bgee" id="ENSG00000197852">
    <property type="expression patterns" value="Expressed in blood and 142 other cell types or tissues"/>
</dbReference>
<dbReference type="ExpressionAtlas" id="Q9NTI7">
    <property type="expression patterns" value="baseline and differential"/>
</dbReference>
<dbReference type="GO" id="GO:0043231">
    <property type="term" value="C:intracellular membrane-bounded organelle"/>
    <property type="evidence" value="ECO:0000314"/>
    <property type="project" value="HPA"/>
</dbReference>
<dbReference type="GO" id="GO:0005730">
    <property type="term" value="C:nucleolus"/>
    <property type="evidence" value="ECO:0000314"/>
    <property type="project" value="HPA"/>
</dbReference>
<dbReference type="GO" id="GO:0005654">
    <property type="term" value="C:nucleoplasm"/>
    <property type="evidence" value="ECO:0000314"/>
    <property type="project" value="HPA"/>
</dbReference>
<dbReference type="GO" id="GO:0005634">
    <property type="term" value="C:nucleus"/>
    <property type="evidence" value="ECO:0000314"/>
    <property type="project" value="UniProtKB"/>
</dbReference>
<dbReference type="GO" id="GO:0019901">
    <property type="term" value="F:protein kinase binding"/>
    <property type="evidence" value="ECO:0000353"/>
    <property type="project" value="UniProtKB"/>
</dbReference>
<dbReference type="GO" id="GO:0030291">
    <property type="term" value="F:protein serine/threonine kinase inhibitor activity"/>
    <property type="evidence" value="ECO:0000250"/>
    <property type="project" value="UniProtKB"/>
</dbReference>
<dbReference type="FunFam" id="3.30.200.20:FF:000319">
    <property type="entry name" value="Inka box actin regulator 2"/>
    <property type="match status" value="1"/>
</dbReference>
<dbReference type="Gene3D" id="3.30.200.20">
    <property type="entry name" value="Phosphorylase Kinase, domain 1"/>
    <property type="match status" value="1"/>
</dbReference>
<dbReference type="InterPro" id="IPR029267">
    <property type="entry name" value="FAM212"/>
</dbReference>
<dbReference type="InterPro" id="IPR039201">
    <property type="entry name" value="Inka"/>
</dbReference>
<dbReference type="PANTHER" id="PTHR28615">
    <property type="entry name" value="PAK4-INHIBITOR INKA1-RELATED"/>
    <property type="match status" value="1"/>
</dbReference>
<dbReference type="PANTHER" id="PTHR28615:SF2">
    <property type="entry name" value="PAK4-INHIBITOR INKA2"/>
    <property type="match status" value="1"/>
</dbReference>
<dbReference type="Pfam" id="PF15342">
    <property type="entry name" value="FAM212"/>
    <property type="match status" value="1"/>
</dbReference>
<sequence>MTMESREMDCYLRRLKQELMSMKEVGDGLQDQMNCMMGALQELKLLQVQTALEQLEISGGGPVPGSPEGPRTQCEHPCWEGGRGPARPTVCSPSSQPSLGSSTKFPSHRSVCGRDLAPLPRTQPHQSCAQQGPERVEPDDWTSTLMSRGRNRQPLVLGDNVFADLVGNWLDLPELEKGGEKGETGGAREPKGEKGQPQELGRRFALTANIFKKFLRSVRPDRDRLLKEKPGWVTPMVPESRTGRSQKVKKRSLSKGSGHFPFPGTGEHRRGENPPTSCPKALEHSPSGFDINTAVWV</sequence>
<feature type="chain" id="PRO_0000304994" description="PAK4-inhibitor INKA2">
    <location>
        <begin position="1"/>
        <end position="297"/>
    </location>
</feature>
<feature type="region of interest" description="Disordered" evidence="2">
    <location>
        <begin position="82"/>
        <end position="109"/>
    </location>
</feature>
<feature type="region of interest" description="Inka box" evidence="1">
    <location>
        <begin position="137"/>
        <end position="180"/>
    </location>
</feature>
<feature type="region of interest" description="Disordered" evidence="2">
    <location>
        <begin position="175"/>
        <end position="200"/>
    </location>
</feature>
<feature type="region of interest" description="Disordered" evidence="2">
    <location>
        <begin position="234"/>
        <end position="285"/>
    </location>
</feature>
<feature type="compositionally biased region" description="Low complexity" evidence="2">
    <location>
        <begin position="92"/>
        <end position="102"/>
    </location>
</feature>
<feature type="compositionally biased region" description="Basic residues" evidence="2">
    <location>
        <begin position="244"/>
        <end position="253"/>
    </location>
</feature>
<name>INKA2_HUMAN</name>
<gene>
    <name evidence="6" type="primary">INKA2</name>
    <name evidence="6" type="synonym">C1orf183</name>
    <name type="synonym">FAM212B</name>
</gene>
<protein>
    <recommendedName>
        <fullName evidence="5">PAK4-inhibitor INKA2</fullName>
    </recommendedName>
    <alternativeName>
        <fullName evidence="4">Induced in neural crest by AP2-alpha protein-related homolog</fullName>
        <shortName evidence="4">Inca-r</shortName>
    </alternativeName>
    <alternativeName>
        <fullName evidence="6">Inka-box actin regulator 2</fullName>
    </alternativeName>
</protein>
<organism>
    <name type="scientific">Homo sapiens</name>
    <name type="common">Human</name>
    <dbReference type="NCBI Taxonomy" id="9606"/>
    <lineage>
        <taxon>Eukaryota</taxon>
        <taxon>Metazoa</taxon>
        <taxon>Chordata</taxon>
        <taxon>Craniata</taxon>
        <taxon>Vertebrata</taxon>
        <taxon>Euteleostomi</taxon>
        <taxon>Mammalia</taxon>
        <taxon>Eutheria</taxon>
        <taxon>Euarchontoglires</taxon>
        <taxon>Primates</taxon>
        <taxon>Haplorrhini</taxon>
        <taxon>Catarrhini</taxon>
        <taxon>Hominidae</taxon>
        <taxon>Homo</taxon>
    </lineage>
</organism>
<accession>Q9NTI7</accession>
<accession>B3KP38</accession>
<accession>B4DF94</accession>
<accession>Q9NTI6</accession>
<keyword id="KW-0539">Nucleus</keyword>
<keyword id="KW-1267">Proteomics identification</keyword>
<keyword id="KW-1185">Reference proteome</keyword>